<protein>
    <recommendedName>
        <fullName evidence="2">Large ribosomal subunit protein eL24</fullName>
    </recommendedName>
    <alternativeName>
        <fullName>60S ribosomal protein L24</fullName>
    </alternativeName>
</protein>
<proteinExistence type="evidence at transcript level"/>
<dbReference type="EMBL" id="X94296">
    <property type="protein sequence ID" value="CAA63960.1"/>
    <property type="molecule type" value="mRNA"/>
</dbReference>
<dbReference type="PIR" id="T06178">
    <property type="entry name" value="T06178"/>
</dbReference>
<dbReference type="SMR" id="P50888"/>
<dbReference type="OMA" id="YKFYSGH"/>
<dbReference type="ExpressionAtlas" id="P50888">
    <property type="expression patterns" value="baseline and differential"/>
</dbReference>
<dbReference type="GO" id="GO:0022625">
    <property type="term" value="C:cytosolic large ribosomal subunit"/>
    <property type="evidence" value="ECO:0007669"/>
    <property type="project" value="TreeGrafter"/>
</dbReference>
<dbReference type="GO" id="GO:0003729">
    <property type="term" value="F:mRNA binding"/>
    <property type="evidence" value="ECO:0007669"/>
    <property type="project" value="TreeGrafter"/>
</dbReference>
<dbReference type="GO" id="GO:0003735">
    <property type="term" value="F:structural constituent of ribosome"/>
    <property type="evidence" value="ECO:0007669"/>
    <property type="project" value="InterPro"/>
</dbReference>
<dbReference type="GO" id="GO:0002181">
    <property type="term" value="P:cytoplasmic translation"/>
    <property type="evidence" value="ECO:0007669"/>
    <property type="project" value="TreeGrafter"/>
</dbReference>
<dbReference type="CDD" id="cd00472">
    <property type="entry name" value="Ribosomal_L24e_L24"/>
    <property type="match status" value="1"/>
</dbReference>
<dbReference type="FunFam" id="2.30.170.20:FF:000003">
    <property type="entry name" value="60S ribosomal protein L24"/>
    <property type="match status" value="1"/>
</dbReference>
<dbReference type="Gene3D" id="6.10.250.1270">
    <property type="match status" value="1"/>
</dbReference>
<dbReference type="Gene3D" id="2.30.170.20">
    <property type="entry name" value="Ribosomal protein L24e"/>
    <property type="match status" value="1"/>
</dbReference>
<dbReference type="InterPro" id="IPR038630">
    <property type="entry name" value="L24e/L24_sf"/>
</dbReference>
<dbReference type="InterPro" id="IPR056366">
    <property type="entry name" value="Ribosomal_eL24"/>
</dbReference>
<dbReference type="InterPro" id="IPR000988">
    <property type="entry name" value="Ribosomal_eL24-rel_N"/>
</dbReference>
<dbReference type="InterPro" id="IPR023442">
    <property type="entry name" value="Ribosomal_eL24_CS"/>
</dbReference>
<dbReference type="InterPro" id="IPR011017">
    <property type="entry name" value="TRASH_dom"/>
</dbReference>
<dbReference type="PANTHER" id="PTHR10792">
    <property type="entry name" value="60S RIBOSOMAL PROTEIN L24"/>
    <property type="match status" value="1"/>
</dbReference>
<dbReference type="PANTHER" id="PTHR10792:SF1">
    <property type="entry name" value="RIBOSOMAL PROTEIN L24"/>
    <property type="match status" value="1"/>
</dbReference>
<dbReference type="Pfam" id="PF01246">
    <property type="entry name" value="Ribosomal_L24e"/>
    <property type="match status" value="1"/>
</dbReference>
<dbReference type="SMART" id="SM00746">
    <property type="entry name" value="TRASH"/>
    <property type="match status" value="1"/>
</dbReference>
<dbReference type="SUPFAM" id="SSF57716">
    <property type="entry name" value="Glucocorticoid receptor-like (DNA-binding domain)"/>
    <property type="match status" value="1"/>
</dbReference>
<dbReference type="PROSITE" id="PS01073">
    <property type="entry name" value="RIBOSOMAL_L24E"/>
    <property type="match status" value="1"/>
</dbReference>
<accession>P50888</accession>
<sequence length="162" mass="18400">MVLKTELCRFSGQKIYPGKGIRFIRSDSQVFLFANSKCKRYFHNRLKPAKLCWTAMYRKQHKKDIHAEAAKKRRRTTKKPYSRSIVGATLEVIQKKRAEKPEVRDAAREAALREIKERIKKTKDEKKAKKAEVTKSQKSQGGKGAVQKGSKGPKLGGGGGKR</sequence>
<comment type="subcellular location">
    <subcellularLocation>
        <location>Cytoplasm</location>
    </subcellularLocation>
</comment>
<comment type="similarity">
    <text evidence="2">Belongs to the eukaryotic ribosomal protein eL24 family.</text>
</comment>
<reference key="1">
    <citation type="online journal article" date="1996" name="Plant Gene Register">
        <title>Ribosomal protein L24E homologue is expressed in barley endosperms.</title>
        <authorList>
            <person name="Rasmussen S.K."/>
            <person name="Klausen J."/>
        </authorList>
        <locator>PGR96-011</locator>
    </citation>
    <scope>NUCLEOTIDE SEQUENCE [MRNA]</scope>
    <source>
        <strain>cv. Bomi</strain>
        <tissue>Endosperm</tissue>
    </source>
</reference>
<gene>
    <name type="primary">RPL24</name>
</gene>
<keyword id="KW-0963">Cytoplasm</keyword>
<keyword id="KW-0687">Ribonucleoprotein</keyword>
<keyword id="KW-0689">Ribosomal protein</keyword>
<evidence type="ECO:0000256" key="1">
    <source>
        <dbReference type="SAM" id="MobiDB-lite"/>
    </source>
</evidence>
<evidence type="ECO:0000305" key="2"/>
<name>RL24_HORVU</name>
<feature type="chain" id="PRO_0000136883" description="Large ribosomal subunit protein eL24">
    <location>
        <begin position="1"/>
        <end position="162"/>
    </location>
</feature>
<feature type="region of interest" description="Disordered" evidence="1">
    <location>
        <begin position="64"/>
        <end position="83"/>
    </location>
</feature>
<feature type="region of interest" description="Disordered" evidence="1">
    <location>
        <begin position="117"/>
        <end position="162"/>
    </location>
</feature>
<feature type="compositionally biased region" description="Basic residues" evidence="1">
    <location>
        <begin position="71"/>
        <end position="81"/>
    </location>
</feature>
<feature type="compositionally biased region" description="Basic and acidic residues" evidence="1">
    <location>
        <begin position="117"/>
        <end position="135"/>
    </location>
</feature>
<organism>
    <name type="scientific">Hordeum vulgare</name>
    <name type="common">Barley</name>
    <dbReference type="NCBI Taxonomy" id="4513"/>
    <lineage>
        <taxon>Eukaryota</taxon>
        <taxon>Viridiplantae</taxon>
        <taxon>Streptophyta</taxon>
        <taxon>Embryophyta</taxon>
        <taxon>Tracheophyta</taxon>
        <taxon>Spermatophyta</taxon>
        <taxon>Magnoliopsida</taxon>
        <taxon>Liliopsida</taxon>
        <taxon>Poales</taxon>
        <taxon>Poaceae</taxon>
        <taxon>BOP clade</taxon>
        <taxon>Pooideae</taxon>
        <taxon>Triticodae</taxon>
        <taxon>Triticeae</taxon>
        <taxon>Hordeinae</taxon>
        <taxon>Hordeum</taxon>
    </lineage>
</organism>